<name>NU4M_MYXGL</name>
<comment type="function">
    <text evidence="1">Core subunit of the mitochondrial membrane respiratory chain NADH dehydrogenase (Complex I) that is believed to belong to the minimal assembly required for catalysis. Complex I functions in the transfer of electrons from NADH to the respiratory chain. The immediate electron acceptor for the enzyme is believed to be ubiquinone (By similarity).</text>
</comment>
<comment type="catalytic activity">
    <reaction>
        <text>a ubiquinone + NADH + 5 H(+)(in) = a ubiquinol + NAD(+) + 4 H(+)(out)</text>
        <dbReference type="Rhea" id="RHEA:29091"/>
        <dbReference type="Rhea" id="RHEA-COMP:9565"/>
        <dbReference type="Rhea" id="RHEA-COMP:9566"/>
        <dbReference type="ChEBI" id="CHEBI:15378"/>
        <dbReference type="ChEBI" id="CHEBI:16389"/>
        <dbReference type="ChEBI" id="CHEBI:17976"/>
        <dbReference type="ChEBI" id="CHEBI:57540"/>
        <dbReference type="ChEBI" id="CHEBI:57945"/>
        <dbReference type="EC" id="7.1.1.2"/>
    </reaction>
</comment>
<comment type="subcellular location">
    <subcellularLocation>
        <location evidence="1">Mitochondrion membrane</location>
        <topology evidence="1">Multi-pass membrane protein</topology>
    </subcellularLocation>
</comment>
<comment type="similarity">
    <text evidence="3">Belongs to the complex I subunit 4 family.</text>
</comment>
<geneLocation type="mitochondrion"/>
<feature type="chain" id="PRO_0000117959" description="NADH-ubiquinone oxidoreductase chain 4">
    <location>
        <begin position="1"/>
        <end position="458"/>
    </location>
</feature>
<feature type="transmembrane region" description="Helical" evidence="2">
    <location>
        <begin position="22"/>
        <end position="42"/>
    </location>
</feature>
<feature type="transmembrane region" description="Helical" evidence="2">
    <location>
        <begin position="63"/>
        <end position="83"/>
    </location>
</feature>
<feature type="transmembrane region" description="Helical" evidence="2">
    <location>
        <begin position="96"/>
        <end position="116"/>
    </location>
</feature>
<feature type="transmembrane region" description="Helical" evidence="2">
    <location>
        <begin position="117"/>
        <end position="137"/>
    </location>
</feature>
<feature type="transmembrane region" description="Helical" evidence="2">
    <location>
        <begin position="150"/>
        <end position="170"/>
    </location>
</feature>
<feature type="transmembrane region" description="Helical" evidence="2">
    <location>
        <begin position="194"/>
        <end position="214"/>
    </location>
</feature>
<feature type="transmembrane region" description="Helical" evidence="2">
    <location>
        <begin position="224"/>
        <end position="244"/>
    </location>
</feature>
<feature type="transmembrane region" description="Helical" evidence="2">
    <location>
        <begin position="257"/>
        <end position="277"/>
    </location>
</feature>
<feature type="transmembrane region" description="Helical" evidence="2">
    <location>
        <begin position="284"/>
        <end position="306"/>
    </location>
</feature>
<feature type="transmembrane region" description="Helical" evidence="2">
    <location>
        <begin position="311"/>
        <end position="333"/>
    </location>
</feature>
<feature type="transmembrane region" description="Helical" evidence="2">
    <location>
        <begin position="350"/>
        <end position="370"/>
    </location>
</feature>
<feature type="transmembrane region" description="Helical" evidence="2">
    <location>
        <begin position="391"/>
        <end position="413"/>
    </location>
</feature>
<feature type="transmembrane region" description="Helical" evidence="2">
    <location>
        <begin position="434"/>
        <end position="454"/>
    </location>
</feature>
<feature type="sequence conflict" description="In Ref. 1; CAA75488." evidence="3" ref="1">
    <original>S</original>
    <variation>L</variation>
    <location>
        <position position="153"/>
    </location>
</feature>
<accession>Q9G2W9</accession>
<accession>O63920</accession>
<protein>
    <recommendedName>
        <fullName>NADH-ubiquinone oxidoreductase chain 4</fullName>
        <ecNumber>7.1.1.2</ecNumber>
    </recommendedName>
    <alternativeName>
        <fullName>NADH dehydrogenase subunit 4</fullName>
    </alternativeName>
</protein>
<organism>
    <name type="scientific">Myxine glutinosa</name>
    <name type="common">Atlantic hagfish</name>
    <dbReference type="NCBI Taxonomy" id="7769"/>
    <lineage>
        <taxon>Eukaryota</taxon>
        <taxon>Metazoa</taxon>
        <taxon>Chordata</taxon>
        <taxon>Craniata</taxon>
        <taxon>Vertebrata</taxon>
        <taxon>Cyclostomata</taxon>
        <taxon>Myxini</taxon>
        <taxon>Myxiniformes</taxon>
        <taxon>Myxinidae</taxon>
        <taxon>Myxininae</taxon>
        <taxon>Myxine</taxon>
    </lineage>
</organism>
<sequence length="458" mass="52033">MLKTIFSLIAIIPMTLSFKKQFFWTAFISSSFLMPFLFFIFTPLSFNSSFLMHLQNKLFGYDMISAPLVFLSLWMLPLMALASQHHMKKSPLSYQLLYITILIIMQTLLILTFLSTNLMNFYILFESSLIPILLIIFRWGNQKERINAGIYLSFYTLIGSLPLLASLLFLSNTLSTLYIPILMMESSEMYHSPILWLGCFSALLIKTPLYGFHLWLPKAHVEATIAGSMTLAALMLKLGGYGMIRLSLMPFLHSPKLSLILISIALWGAVMTSFICLRQTDLKALIAYSSVSHMGLMTASIMTLSLWGMSGAFIMMIAHGLSSSALFFLANSNYEKTNTRTIILLRHTQMLLPLTSLWWLFIILTNLAMPPSINFISEITIMSSLFLWSPLTFPFLALTMVITTTYSMSMFMLAQGKLSKMTKILSPFSTREHLTLFLHLFPMIAIMAYPNMIINIFC</sequence>
<proteinExistence type="inferred from homology"/>
<reference key="1">
    <citation type="journal article" date="1998" name="J. Mol. Evol.">
        <title>The mitochondrial DNA molecule of the hagfish (Myxine glutinosa) and vertebrate phylogeny.</title>
        <authorList>
            <person name="Rasmussen A.S."/>
            <person name="Janke A."/>
            <person name="Arnason U."/>
        </authorList>
    </citation>
    <scope>NUCLEOTIDE SEQUENCE [GENOMIC DNA]</scope>
</reference>
<reference key="2">
    <citation type="journal article" date="2001" name="J. Mol. Evol.">
        <title>The complete mitochondrial genome of the hagfish Myxine glutinosa: unique features of the control region.</title>
        <authorList>
            <person name="Delarbre C."/>
            <person name="Rasmussen A.S."/>
            <person name="Arnason U."/>
            <person name="Gachelin G."/>
        </authorList>
    </citation>
    <scope>NUCLEOTIDE SEQUENCE [GENOMIC DNA]</scope>
</reference>
<gene>
    <name type="primary">MT-ND4</name>
    <name type="synonym">MTND4</name>
    <name type="synonym">NADH4</name>
    <name type="synonym">ND4</name>
</gene>
<keyword id="KW-0249">Electron transport</keyword>
<keyword id="KW-0472">Membrane</keyword>
<keyword id="KW-0496">Mitochondrion</keyword>
<keyword id="KW-0520">NAD</keyword>
<keyword id="KW-0679">Respiratory chain</keyword>
<keyword id="KW-1278">Translocase</keyword>
<keyword id="KW-0812">Transmembrane</keyword>
<keyword id="KW-1133">Transmembrane helix</keyword>
<keyword id="KW-0813">Transport</keyword>
<keyword id="KW-0830">Ubiquinone</keyword>
<evidence type="ECO:0000250" key="1"/>
<evidence type="ECO:0000255" key="2"/>
<evidence type="ECO:0000305" key="3"/>
<dbReference type="EC" id="7.1.1.2"/>
<dbReference type="EMBL" id="Y15189">
    <property type="protein sequence ID" value="CAA75488.1"/>
    <property type="molecule type" value="Genomic_DNA"/>
</dbReference>
<dbReference type="EMBL" id="AJ404477">
    <property type="protein sequence ID" value="CAC20658.1"/>
    <property type="molecule type" value="Genomic_DNA"/>
</dbReference>
<dbReference type="PIR" id="T13819">
    <property type="entry name" value="T13819"/>
</dbReference>
<dbReference type="RefSeq" id="NP_073282.1">
    <property type="nucleotide sequence ID" value="NC_002639.1"/>
</dbReference>
<dbReference type="SMR" id="Q9G2W9"/>
<dbReference type="GeneID" id="802343"/>
<dbReference type="CTD" id="4538"/>
<dbReference type="GO" id="GO:0031966">
    <property type="term" value="C:mitochondrial membrane"/>
    <property type="evidence" value="ECO:0007669"/>
    <property type="project" value="UniProtKB-SubCell"/>
</dbReference>
<dbReference type="GO" id="GO:0008137">
    <property type="term" value="F:NADH dehydrogenase (ubiquinone) activity"/>
    <property type="evidence" value="ECO:0007669"/>
    <property type="project" value="UniProtKB-EC"/>
</dbReference>
<dbReference type="GO" id="GO:0048039">
    <property type="term" value="F:ubiquinone binding"/>
    <property type="evidence" value="ECO:0007669"/>
    <property type="project" value="TreeGrafter"/>
</dbReference>
<dbReference type="GO" id="GO:0042773">
    <property type="term" value="P:ATP synthesis coupled electron transport"/>
    <property type="evidence" value="ECO:0007669"/>
    <property type="project" value="InterPro"/>
</dbReference>
<dbReference type="GO" id="GO:0015990">
    <property type="term" value="P:electron transport coupled proton transport"/>
    <property type="evidence" value="ECO:0007669"/>
    <property type="project" value="TreeGrafter"/>
</dbReference>
<dbReference type="InterPro" id="IPR000260">
    <property type="entry name" value="NADH4_N"/>
</dbReference>
<dbReference type="InterPro" id="IPR003918">
    <property type="entry name" value="NADH_UbQ_OxRdtase"/>
</dbReference>
<dbReference type="InterPro" id="IPR001750">
    <property type="entry name" value="ND/Mrp_TM"/>
</dbReference>
<dbReference type="PANTHER" id="PTHR43507">
    <property type="entry name" value="NADH-UBIQUINONE OXIDOREDUCTASE CHAIN 4"/>
    <property type="match status" value="1"/>
</dbReference>
<dbReference type="PANTHER" id="PTHR43507:SF20">
    <property type="entry name" value="NADH-UBIQUINONE OXIDOREDUCTASE CHAIN 4"/>
    <property type="match status" value="1"/>
</dbReference>
<dbReference type="Pfam" id="PF01059">
    <property type="entry name" value="Oxidored_q5_N"/>
    <property type="match status" value="1"/>
</dbReference>
<dbReference type="Pfam" id="PF00361">
    <property type="entry name" value="Proton_antipo_M"/>
    <property type="match status" value="1"/>
</dbReference>
<dbReference type="PRINTS" id="PR01437">
    <property type="entry name" value="NUOXDRDTASE4"/>
</dbReference>